<keyword id="KW-0687">Ribonucleoprotein</keyword>
<keyword id="KW-0689">Ribosomal protein</keyword>
<proteinExistence type="inferred from homology"/>
<accession>Q03IF9</accession>
<name>RL29_STRTD</name>
<feature type="chain" id="PRO_1000007633" description="Large ribosomal subunit protein uL29">
    <location>
        <begin position="1"/>
        <end position="68"/>
    </location>
</feature>
<evidence type="ECO:0000255" key="1">
    <source>
        <dbReference type="HAMAP-Rule" id="MF_00374"/>
    </source>
</evidence>
<evidence type="ECO:0000305" key="2"/>
<protein>
    <recommendedName>
        <fullName evidence="1">Large ribosomal subunit protein uL29</fullName>
    </recommendedName>
    <alternativeName>
        <fullName evidence="2">50S ribosomal protein L29</fullName>
    </alternativeName>
</protein>
<reference key="1">
    <citation type="journal article" date="2006" name="Proc. Natl. Acad. Sci. U.S.A.">
        <title>Comparative genomics of the lactic acid bacteria.</title>
        <authorList>
            <person name="Makarova K.S."/>
            <person name="Slesarev A."/>
            <person name="Wolf Y.I."/>
            <person name="Sorokin A."/>
            <person name="Mirkin B."/>
            <person name="Koonin E.V."/>
            <person name="Pavlov A."/>
            <person name="Pavlova N."/>
            <person name="Karamychev V."/>
            <person name="Polouchine N."/>
            <person name="Shakhova V."/>
            <person name="Grigoriev I."/>
            <person name="Lou Y."/>
            <person name="Rohksar D."/>
            <person name="Lucas S."/>
            <person name="Huang K."/>
            <person name="Goodstein D.M."/>
            <person name="Hawkins T."/>
            <person name="Plengvidhya V."/>
            <person name="Welker D."/>
            <person name="Hughes J."/>
            <person name="Goh Y."/>
            <person name="Benson A."/>
            <person name="Baldwin K."/>
            <person name="Lee J.-H."/>
            <person name="Diaz-Muniz I."/>
            <person name="Dosti B."/>
            <person name="Smeianov V."/>
            <person name="Wechter W."/>
            <person name="Barabote R."/>
            <person name="Lorca G."/>
            <person name="Altermann E."/>
            <person name="Barrangou R."/>
            <person name="Ganesan B."/>
            <person name="Xie Y."/>
            <person name="Rawsthorne H."/>
            <person name="Tamir D."/>
            <person name="Parker C."/>
            <person name="Breidt F."/>
            <person name="Broadbent J.R."/>
            <person name="Hutkins R."/>
            <person name="O'Sullivan D."/>
            <person name="Steele J."/>
            <person name="Unlu G."/>
            <person name="Saier M.H. Jr."/>
            <person name="Klaenhammer T."/>
            <person name="Richardson P."/>
            <person name="Kozyavkin S."/>
            <person name="Weimer B.C."/>
            <person name="Mills D.A."/>
        </authorList>
    </citation>
    <scope>NUCLEOTIDE SEQUENCE [LARGE SCALE GENOMIC DNA]</scope>
    <source>
        <strain>ATCC BAA-491 / LMD-9</strain>
    </source>
</reference>
<organism>
    <name type="scientific">Streptococcus thermophilus (strain ATCC BAA-491 / LMD-9)</name>
    <dbReference type="NCBI Taxonomy" id="322159"/>
    <lineage>
        <taxon>Bacteria</taxon>
        <taxon>Bacillati</taxon>
        <taxon>Bacillota</taxon>
        <taxon>Bacilli</taxon>
        <taxon>Lactobacillales</taxon>
        <taxon>Streptococcaceae</taxon>
        <taxon>Streptococcus</taxon>
    </lineage>
</organism>
<dbReference type="EMBL" id="CP000419">
    <property type="protein sequence ID" value="ABJ67013.1"/>
    <property type="molecule type" value="Genomic_DNA"/>
</dbReference>
<dbReference type="RefSeq" id="WP_002952156.1">
    <property type="nucleotide sequence ID" value="NZ_CP086001.1"/>
</dbReference>
<dbReference type="SMR" id="Q03IF9"/>
<dbReference type="GeneID" id="66899654"/>
<dbReference type="KEGG" id="ste:STER_1899"/>
<dbReference type="HOGENOM" id="CLU_158491_5_2_9"/>
<dbReference type="GO" id="GO:0022625">
    <property type="term" value="C:cytosolic large ribosomal subunit"/>
    <property type="evidence" value="ECO:0007669"/>
    <property type="project" value="TreeGrafter"/>
</dbReference>
<dbReference type="GO" id="GO:0003735">
    <property type="term" value="F:structural constituent of ribosome"/>
    <property type="evidence" value="ECO:0007669"/>
    <property type="project" value="InterPro"/>
</dbReference>
<dbReference type="GO" id="GO:0006412">
    <property type="term" value="P:translation"/>
    <property type="evidence" value="ECO:0007669"/>
    <property type="project" value="UniProtKB-UniRule"/>
</dbReference>
<dbReference type="CDD" id="cd00427">
    <property type="entry name" value="Ribosomal_L29_HIP"/>
    <property type="match status" value="1"/>
</dbReference>
<dbReference type="FunFam" id="1.10.287.310:FF:000001">
    <property type="entry name" value="50S ribosomal protein L29"/>
    <property type="match status" value="1"/>
</dbReference>
<dbReference type="Gene3D" id="1.10.287.310">
    <property type="match status" value="1"/>
</dbReference>
<dbReference type="HAMAP" id="MF_00374">
    <property type="entry name" value="Ribosomal_uL29"/>
    <property type="match status" value="1"/>
</dbReference>
<dbReference type="InterPro" id="IPR050063">
    <property type="entry name" value="Ribosomal_protein_uL29"/>
</dbReference>
<dbReference type="InterPro" id="IPR001854">
    <property type="entry name" value="Ribosomal_uL29"/>
</dbReference>
<dbReference type="InterPro" id="IPR018254">
    <property type="entry name" value="Ribosomal_uL29_CS"/>
</dbReference>
<dbReference type="InterPro" id="IPR036049">
    <property type="entry name" value="Ribosomal_uL29_sf"/>
</dbReference>
<dbReference type="NCBIfam" id="TIGR00012">
    <property type="entry name" value="L29"/>
    <property type="match status" value="1"/>
</dbReference>
<dbReference type="PANTHER" id="PTHR10916">
    <property type="entry name" value="60S RIBOSOMAL PROTEIN L35/50S RIBOSOMAL PROTEIN L29"/>
    <property type="match status" value="1"/>
</dbReference>
<dbReference type="PANTHER" id="PTHR10916:SF0">
    <property type="entry name" value="LARGE RIBOSOMAL SUBUNIT PROTEIN UL29C"/>
    <property type="match status" value="1"/>
</dbReference>
<dbReference type="Pfam" id="PF00831">
    <property type="entry name" value="Ribosomal_L29"/>
    <property type="match status" value="1"/>
</dbReference>
<dbReference type="SUPFAM" id="SSF46561">
    <property type="entry name" value="Ribosomal protein L29 (L29p)"/>
    <property type="match status" value="1"/>
</dbReference>
<dbReference type="PROSITE" id="PS00579">
    <property type="entry name" value="RIBOSOMAL_L29"/>
    <property type="match status" value="1"/>
</dbReference>
<sequence length="68" mass="7900">MKLEEIKKFVAELRGLSQEELAKKENELKKELFDLRFQAAAGQLDQTARLNEVKKQIARIKTVQSEIK</sequence>
<comment type="similarity">
    <text evidence="1">Belongs to the universal ribosomal protein uL29 family.</text>
</comment>
<gene>
    <name evidence="1" type="primary">rpmC</name>
    <name type="ordered locus">STER_1899</name>
</gene>